<evidence type="ECO:0000255" key="1">
    <source>
        <dbReference type="HAMAP-Rule" id="MF_01852"/>
    </source>
</evidence>
<feature type="chain" id="PRO_0000352955" description="Threonylcarbamoyl-AMP synthase">
    <location>
        <begin position="1"/>
        <end position="185"/>
    </location>
</feature>
<feature type="domain" description="YrdC-like" evidence="1">
    <location>
        <begin position="4"/>
        <end position="185"/>
    </location>
</feature>
<sequence length="185" mass="20462">MVSSFRVQQAAREIRAGAVIAYPTEAVWGLGCDPWNEDAVYRLLALKSRPVDKGLILIADNIRQFDFLFEDFPEDWIDRMGSTWPGPNTWLVPHQDLLPEWVTGQHDTVALRVSDHPVVRELCALVGPLISTSCNPGGRPAAKTRLRVEQYFHGQLDLVLGGALGGRKNPSVIRNLATGEVVRPG</sequence>
<dbReference type="EC" id="2.7.7.87" evidence="1"/>
<dbReference type="EMBL" id="CP000712">
    <property type="protein sequence ID" value="ABQ76261.1"/>
    <property type="molecule type" value="Genomic_DNA"/>
</dbReference>
<dbReference type="SMR" id="A5VWK1"/>
<dbReference type="KEGG" id="ppf:Pput_0086"/>
<dbReference type="eggNOG" id="COG0009">
    <property type="taxonomic scope" value="Bacteria"/>
</dbReference>
<dbReference type="HOGENOM" id="CLU_031397_6_0_6"/>
<dbReference type="GO" id="GO:0005737">
    <property type="term" value="C:cytoplasm"/>
    <property type="evidence" value="ECO:0007669"/>
    <property type="project" value="UniProtKB-SubCell"/>
</dbReference>
<dbReference type="GO" id="GO:0005524">
    <property type="term" value="F:ATP binding"/>
    <property type="evidence" value="ECO:0007669"/>
    <property type="project" value="UniProtKB-UniRule"/>
</dbReference>
<dbReference type="GO" id="GO:0003725">
    <property type="term" value="F:double-stranded RNA binding"/>
    <property type="evidence" value="ECO:0007669"/>
    <property type="project" value="InterPro"/>
</dbReference>
<dbReference type="GO" id="GO:0061710">
    <property type="term" value="F:L-threonylcarbamoyladenylate synthase"/>
    <property type="evidence" value="ECO:0007669"/>
    <property type="project" value="UniProtKB-EC"/>
</dbReference>
<dbReference type="GO" id="GO:0000049">
    <property type="term" value="F:tRNA binding"/>
    <property type="evidence" value="ECO:0007669"/>
    <property type="project" value="TreeGrafter"/>
</dbReference>
<dbReference type="GO" id="GO:0006450">
    <property type="term" value="P:regulation of translational fidelity"/>
    <property type="evidence" value="ECO:0007669"/>
    <property type="project" value="TreeGrafter"/>
</dbReference>
<dbReference type="GO" id="GO:0002949">
    <property type="term" value="P:tRNA threonylcarbamoyladenosine modification"/>
    <property type="evidence" value="ECO:0007669"/>
    <property type="project" value="UniProtKB-UniRule"/>
</dbReference>
<dbReference type="FunFam" id="3.90.870.10:FF:000004">
    <property type="entry name" value="Threonylcarbamoyl-AMP synthase"/>
    <property type="match status" value="1"/>
</dbReference>
<dbReference type="Gene3D" id="3.90.870.10">
    <property type="entry name" value="DHBP synthase"/>
    <property type="match status" value="1"/>
</dbReference>
<dbReference type="HAMAP" id="MF_01852">
    <property type="entry name" value="TsaC"/>
    <property type="match status" value="1"/>
</dbReference>
<dbReference type="InterPro" id="IPR017945">
    <property type="entry name" value="DHBP_synth_RibB-like_a/b_dom"/>
</dbReference>
<dbReference type="InterPro" id="IPR006070">
    <property type="entry name" value="Sua5-like_dom"/>
</dbReference>
<dbReference type="InterPro" id="IPR023535">
    <property type="entry name" value="TC-AMP_synthase"/>
</dbReference>
<dbReference type="InterPro" id="IPR050156">
    <property type="entry name" value="TC-AMP_synthase_SUA5"/>
</dbReference>
<dbReference type="PANTHER" id="PTHR17490">
    <property type="entry name" value="SUA5"/>
    <property type="match status" value="1"/>
</dbReference>
<dbReference type="PANTHER" id="PTHR17490:SF18">
    <property type="entry name" value="THREONYLCARBAMOYL-AMP SYNTHASE"/>
    <property type="match status" value="1"/>
</dbReference>
<dbReference type="Pfam" id="PF01300">
    <property type="entry name" value="Sua5_yciO_yrdC"/>
    <property type="match status" value="1"/>
</dbReference>
<dbReference type="SUPFAM" id="SSF55821">
    <property type="entry name" value="YrdC/RibB"/>
    <property type="match status" value="1"/>
</dbReference>
<dbReference type="PROSITE" id="PS51163">
    <property type="entry name" value="YRDC"/>
    <property type="match status" value="1"/>
</dbReference>
<comment type="function">
    <text evidence="1">Required for the formation of a threonylcarbamoyl group on adenosine at position 37 (t(6)A37) in tRNAs that read codons beginning with adenine. Catalyzes the conversion of L-threonine, HCO(3)(-)/CO(2) and ATP to give threonylcarbamoyl-AMP (TC-AMP) as the acyladenylate intermediate, with the release of diphosphate.</text>
</comment>
<comment type="catalytic activity">
    <reaction evidence="1">
        <text>L-threonine + hydrogencarbonate + ATP = L-threonylcarbamoyladenylate + diphosphate + H2O</text>
        <dbReference type="Rhea" id="RHEA:36407"/>
        <dbReference type="ChEBI" id="CHEBI:15377"/>
        <dbReference type="ChEBI" id="CHEBI:17544"/>
        <dbReference type="ChEBI" id="CHEBI:30616"/>
        <dbReference type="ChEBI" id="CHEBI:33019"/>
        <dbReference type="ChEBI" id="CHEBI:57926"/>
        <dbReference type="ChEBI" id="CHEBI:73682"/>
        <dbReference type="EC" id="2.7.7.87"/>
    </reaction>
</comment>
<comment type="subcellular location">
    <subcellularLocation>
        <location evidence="1">Cytoplasm</location>
    </subcellularLocation>
</comment>
<comment type="similarity">
    <text evidence="1">Belongs to the SUA5 family. TsaC subfamily.</text>
</comment>
<keyword id="KW-0067">ATP-binding</keyword>
<keyword id="KW-0963">Cytoplasm</keyword>
<keyword id="KW-0547">Nucleotide-binding</keyword>
<keyword id="KW-0548">Nucleotidyltransferase</keyword>
<keyword id="KW-0808">Transferase</keyword>
<keyword id="KW-0819">tRNA processing</keyword>
<gene>
    <name evidence="1" type="primary">tsaC</name>
    <name type="synonym">rimN</name>
    <name type="ordered locus">Pput_0086</name>
</gene>
<protein>
    <recommendedName>
        <fullName evidence="1">Threonylcarbamoyl-AMP synthase</fullName>
        <shortName evidence="1">TC-AMP synthase</shortName>
        <ecNumber evidence="1">2.7.7.87</ecNumber>
    </recommendedName>
    <alternativeName>
        <fullName evidence="1">L-threonylcarbamoyladenylate synthase</fullName>
    </alternativeName>
    <alternativeName>
        <fullName evidence="1">t(6)A37 threonylcarbamoyladenosine biosynthesis protein TsaC</fullName>
    </alternativeName>
    <alternativeName>
        <fullName evidence="1">tRNA threonylcarbamoyladenosine biosynthesis protein TsaC</fullName>
    </alternativeName>
</protein>
<name>TSAC_PSEP1</name>
<organism>
    <name type="scientific">Pseudomonas putida (strain ATCC 700007 / DSM 6899 / JCM 31910 / BCRC 17059 / LMG 24140 / F1)</name>
    <dbReference type="NCBI Taxonomy" id="351746"/>
    <lineage>
        <taxon>Bacteria</taxon>
        <taxon>Pseudomonadati</taxon>
        <taxon>Pseudomonadota</taxon>
        <taxon>Gammaproteobacteria</taxon>
        <taxon>Pseudomonadales</taxon>
        <taxon>Pseudomonadaceae</taxon>
        <taxon>Pseudomonas</taxon>
    </lineage>
</organism>
<reference key="1">
    <citation type="submission" date="2007-05" db="EMBL/GenBank/DDBJ databases">
        <title>Complete sequence of Pseudomonas putida F1.</title>
        <authorList>
            <consortium name="US DOE Joint Genome Institute"/>
            <person name="Copeland A."/>
            <person name="Lucas S."/>
            <person name="Lapidus A."/>
            <person name="Barry K."/>
            <person name="Detter J.C."/>
            <person name="Glavina del Rio T."/>
            <person name="Hammon N."/>
            <person name="Israni S."/>
            <person name="Dalin E."/>
            <person name="Tice H."/>
            <person name="Pitluck S."/>
            <person name="Chain P."/>
            <person name="Malfatti S."/>
            <person name="Shin M."/>
            <person name="Vergez L."/>
            <person name="Schmutz J."/>
            <person name="Larimer F."/>
            <person name="Land M."/>
            <person name="Hauser L."/>
            <person name="Kyrpides N."/>
            <person name="Lykidis A."/>
            <person name="Parales R."/>
            <person name="Richardson P."/>
        </authorList>
    </citation>
    <scope>NUCLEOTIDE SEQUENCE [LARGE SCALE GENOMIC DNA]</scope>
    <source>
        <strain>ATCC 700007 / DSM 6899 / JCM 31910 / BCRC 17059 / LMG 24140 / F1</strain>
    </source>
</reference>
<accession>A5VWK1</accession>
<proteinExistence type="inferred from homology"/>